<name>TRPC_LACE2</name>
<protein>
    <recommendedName>
        <fullName evidence="1">Indole-3-glycerol phosphate synthase</fullName>
        <shortName evidence="1">IGPS</shortName>
        <ecNumber evidence="1">4.1.1.48</ecNumber>
    </recommendedName>
</protein>
<gene>
    <name evidence="1" type="primary">trpC</name>
    <name type="ordered locus">EUBELI_01304</name>
</gene>
<dbReference type="EC" id="4.1.1.48" evidence="1"/>
<dbReference type="EMBL" id="CP001104">
    <property type="protein sequence ID" value="ACR72301.1"/>
    <property type="molecule type" value="Genomic_DNA"/>
</dbReference>
<dbReference type="RefSeq" id="WP_012739536.1">
    <property type="nucleotide sequence ID" value="NC_012778.1"/>
</dbReference>
<dbReference type="SMR" id="C4Z138"/>
<dbReference type="STRING" id="515620.EUBELI_01304"/>
<dbReference type="GeneID" id="41356019"/>
<dbReference type="KEGG" id="eel:EUBELI_01304"/>
<dbReference type="eggNOG" id="COG0134">
    <property type="taxonomic scope" value="Bacteria"/>
</dbReference>
<dbReference type="HOGENOM" id="CLU_034247_2_0_9"/>
<dbReference type="UniPathway" id="UPA00035">
    <property type="reaction ID" value="UER00043"/>
</dbReference>
<dbReference type="Proteomes" id="UP000001476">
    <property type="component" value="Chromosome"/>
</dbReference>
<dbReference type="GO" id="GO:0004425">
    <property type="term" value="F:indole-3-glycerol-phosphate synthase activity"/>
    <property type="evidence" value="ECO:0007669"/>
    <property type="project" value="UniProtKB-UniRule"/>
</dbReference>
<dbReference type="GO" id="GO:0004640">
    <property type="term" value="F:phosphoribosylanthranilate isomerase activity"/>
    <property type="evidence" value="ECO:0007669"/>
    <property type="project" value="TreeGrafter"/>
</dbReference>
<dbReference type="GO" id="GO:0000162">
    <property type="term" value="P:L-tryptophan biosynthetic process"/>
    <property type="evidence" value="ECO:0007669"/>
    <property type="project" value="UniProtKB-UniRule"/>
</dbReference>
<dbReference type="CDD" id="cd00331">
    <property type="entry name" value="IGPS"/>
    <property type="match status" value="1"/>
</dbReference>
<dbReference type="FunFam" id="3.20.20.70:FF:000024">
    <property type="entry name" value="Indole-3-glycerol phosphate synthase"/>
    <property type="match status" value="1"/>
</dbReference>
<dbReference type="Gene3D" id="3.20.20.70">
    <property type="entry name" value="Aldolase class I"/>
    <property type="match status" value="1"/>
</dbReference>
<dbReference type="HAMAP" id="MF_00134_B">
    <property type="entry name" value="IGPS_B"/>
    <property type="match status" value="1"/>
</dbReference>
<dbReference type="InterPro" id="IPR013785">
    <property type="entry name" value="Aldolase_TIM"/>
</dbReference>
<dbReference type="InterPro" id="IPR045186">
    <property type="entry name" value="Indole-3-glycerol_P_synth"/>
</dbReference>
<dbReference type="InterPro" id="IPR013798">
    <property type="entry name" value="Indole-3-glycerol_P_synth_dom"/>
</dbReference>
<dbReference type="InterPro" id="IPR001468">
    <property type="entry name" value="Indole-3-GlycerolPSynthase_CS"/>
</dbReference>
<dbReference type="InterPro" id="IPR011060">
    <property type="entry name" value="RibuloseP-bd_barrel"/>
</dbReference>
<dbReference type="NCBIfam" id="NF001377">
    <property type="entry name" value="PRK00278.2-4"/>
    <property type="match status" value="1"/>
</dbReference>
<dbReference type="PANTHER" id="PTHR22854:SF2">
    <property type="entry name" value="INDOLE-3-GLYCEROL-PHOSPHATE SYNTHASE"/>
    <property type="match status" value="1"/>
</dbReference>
<dbReference type="PANTHER" id="PTHR22854">
    <property type="entry name" value="TRYPTOPHAN BIOSYNTHESIS PROTEIN"/>
    <property type="match status" value="1"/>
</dbReference>
<dbReference type="Pfam" id="PF00218">
    <property type="entry name" value="IGPS"/>
    <property type="match status" value="1"/>
</dbReference>
<dbReference type="SUPFAM" id="SSF51366">
    <property type="entry name" value="Ribulose-phoshate binding barrel"/>
    <property type="match status" value="1"/>
</dbReference>
<dbReference type="PROSITE" id="PS00614">
    <property type="entry name" value="IGPS"/>
    <property type="match status" value="1"/>
</dbReference>
<keyword id="KW-0028">Amino-acid biosynthesis</keyword>
<keyword id="KW-0057">Aromatic amino acid biosynthesis</keyword>
<keyword id="KW-0210">Decarboxylase</keyword>
<keyword id="KW-0456">Lyase</keyword>
<keyword id="KW-1185">Reference proteome</keyword>
<keyword id="KW-0822">Tryptophan biosynthesis</keyword>
<proteinExistence type="inferred from homology"/>
<organism>
    <name type="scientific">Lachnospira eligens (strain ATCC 27750 / DSM 3376 / VPI C15-48 / C15-B4)</name>
    <name type="common">Eubacterium eligens</name>
    <dbReference type="NCBI Taxonomy" id="515620"/>
    <lineage>
        <taxon>Bacteria</taxon>
        <taxon>Bacillati</taxon>
        <taxon>Bacillota</taxon>
        <taxon>Clostridia</taxon>
        <taxon>Lachnospirales</taxon>
        <taxon>Lachnospiraceae</taxon>
        <taxon>Lachnospira</taxon>
    </lineage>
</organism>
<accession>C4Z138</accession>
<feature type="chain" id="PRO_1000203199" description="Indole-3-glycerol phosphate synthase">
    <location>
        <begin position="1"/>
        <end position="268"/>
    </location>
</feature>
<evidence type="ECO:0000255" key="1">
    <source>
        <dbReference type="HAMAP-Rule" id="MF_00134"/>
    </source>
</evidence>
<comment type="catalytic activity">
    <reaction evidence="1">
        <text>1-(2-carboxyphenylamino)-1-deoxy-D-ribulose 5-phosphate + H(+) = (1S,2R)-1-C-(indol-3-yl)glycerol 3-phosphate + CO2 + H2O</text>
        <dbReference type="Rhea" id="RHEA:23476"/>
        <dbReference type="ChEBI" id="CHEBI:15377"/>
        <dbReference type="ChEBI" id="CHEBI:15378"/>
        <dbReference type="ChEBI" id="CHEBI:16526"/>
        <dbReference type="ChEBI" id="CHEBI:58613"/>
        <dbReference type="ChEBI" id="CHEBI:58866"/>
        <dbReference type="EC" id="4.1.1.48"/>
    </reaction>
</comment>
<comment type="pathway">
    <text evidence="1">Amino-acid biosynthesis; L-tryptophan biosynthesis; L-tryptophan from chorismate: step 4/5.</text>
</comment>
<comment type="similarity">
    <text evidence="1">Belongs to the TrpC family.</text>
</comment>
<sequence length="268" mass="30352">MILDVIVEDKLKRLPEHKKRISEEEMTRLAIESQRVSHSFYDALAKDGLSIISEFKKASPSHGNMNNKITLEKRIKQYGESADAISCLTEEDHFKGSTEYLKQIRQMTDLPIIRKDFIIDPYQVYEAKVIGADAVLLIAAILDDSRFKELYDLAYSLGLDVLCEVHNEEEMQRMLNLDVKIIGINNRNLKTFEVDLDTTKKLADMVTPEMRKAGKLLVSESGVADTDDIKVLAKSGADALLIGTVLMEAPKPEELISEFKEVYNAERK</sequence>
<reference key="1">
    <citation type="journal article" date="2009" name="Proc. Natl. Acad. Sci. U.S.A.">
        <title>Characterizing a model human gut microbiota composed of members of its two dominant bacterial phyla.</title>
        <authorList>
            <person name="Mahowald M.A."/>
            <person name="Rey F.E."/>
            <person name="Seedorf H."/>
            <person name="Turnbaugh P.J."/>
            <person name="Fulton R.S."/>
            <person name="Wollam A."/>
            <person name="Shah N."/>
            <person name="Wang C."/>
            <person name="Magrini V."/>
            <person name="Wilson R.K."/>
            <person name="Cantarel B.L."/>
            <person name="Coutinho P.M."/>
            <person name="Henrissat B."/>
            <person name="Crock L.W."/>
            <person name="Russell A."/>
            <person name="Verberkmoes N.C."/>
            <person name="Hettich R.L."/>
            <person name="Gordon J.I."/>
        </authorList>
    </citation>
    <scope>NUCLEOTIDE SEQUENCE [LARGE SCALE GENOMIC DNA]</scope>
    <source>
        <strain>ATCC 27750 / DSM 3376 / VPI C15-48 / C15-B4</strain>
    </source>
</reference>